<dbReference type="EMBL" id="AE016826">
    <property type="protein sequence ID" value="AAO27029.1"/>
    <property type="molecule type" value="Genomic_DNA"/>
</dbReference>
<dbReference type="RefSeq" id="WP_011091430.1">
    <property type="nucleotide sequence ID" value="NC_004545.1"/>
</dbReference>
<dbReference type="SMR" id="P59503"/>
<dbReference type="STRING" id="224915.bbp_304"/>
<dbReference type="KEGG" id="bab:bbp_304"/>
<dbReference type="eggNOG" id="COG0850">
    <property type="taxonomic scope" value="Bacteria"/>
</dbReference>
<dbReference type="HOGENOM" id="CLU_067812_0_1_6"/>
<dbReference type="OrthoDB" id="9794530at2"/>
<dbReference type="Proteomes" id="UP000000601">
    <property type="component" value="Chromosome"/>
</dbReference>
<dbReference type="GO" id="GO:0000902">
    <property type="term" value="P:cell morphogenesis"/>
    <property type="evidence" value="ECO:0007669"/>
    <property type="project" value="InterPro"/>
</dbReference>
<dbReference type="GO" id="GO:0000917">
    <property type="term" value="P:division septum assembly"/>
    <property type="evidence" value="ECO:0007669"/>
    <property type="project" value="UniProtKB-KW"/>
</dbReference>
<dbReference type="GO" id="GO:0051302">
    <property type="term" value="P:regulation of cell division"/>
    <property type="evidence" value="ECO:0007669"/>
    <property type="project" value="InterPro"/>
</dbReference>
<dbReference type="GO" id="GO:1901891">
    <property type="term" value="P:regulation of cell septum assembly"/>
    <property type="evidence" value="ECO:0007669"/>
    <property type="project" value="InterPro"/>
</dbReference>
<dbReference type="Gene3D" id="2.160.20.70">
    <property type="match status" value="1"/>
</dbReference>
<dbReference type="Gene3D" id="3.30.70.260">
    <property type="match status" value="1"/>
</dbReference>
<dbReference type="HAMAP" id="MF_00267">
    <property type="entry name" value="MinC"/>
    <property type="match status" value="1"/>
</dbReference>
<dbReference type="InterPro" id="IPR016098">
    <property type="entry name" value="CAP/MinC_C"/>
</dbReference>
<dbReference type="InterPro" id="IPR013033">
    <property type="entry name" value="MinC"/>
</dbReference>
<dbReference type="InterPro" id="IPR036145">
    <property type="entry name" value="MinC_C_sf"/>
</dbReference>
<dbReference type="InterPro" id="IPR007874">
    <property type="entry name" value="MinC_N"/>
</dbReference>
<dbReference type="InterPro" id="IPR005526">
    <property type="entry name" value="Septum_form_inhib_MinC_C"/>
</dbReference>
<dbReference type="NCBIfam" id="TIGR01222">
    <property type="entry name" value="minC"/>
    <property type="match status" value="1"/>
</dbReference>
<dbReference type="PANTHER" id="PTHR34108">
    <property type="entry name" value="SEPTUM SITE-DETERMINING PROTEIN MINC"/>
    <property type="match status" value="1"/>
</dbReference>
<dbReference type="PANTHER" id="PTHR34108:SF1">
    <property type="entry name" value="SEPTUM SITE-DETERMINING PROTEIN MINC"/>
    <property type="match status" value="1"/>
</dbReference>
<dbReference type="Pfam" id="PF03775">
    <property type="entry name" value="MinC_C"/>
    <property type="match status" value="1"/>
</dbReference>
<dbReference type="Pfam" id="PF05209">
    <property type="entry name" value="MinC_N"/>
    <property type="match status" value="1"/>
</dbReference>
<dbReference type="SUPFAM" id="SSF63848">
    <property type="entry name" value="Cell-division inhibitor MinC, C-terminal domain"/>
    <property type="match status" value="1"/>
</dbReference>
<keyword id="KW-0131">Cell cycle</keyword>
<keyword id="KW-0132">Cell division</keyword>
<keyword id="KW-1185">Reference proteome</keyword>
<keyword id="KW-0717">Septation</keyword>
<organism>
    <name type="scientific">Buchnera aphidicola subsp. Baizongia pistaciae (strain Bp)</name>
    <dbReference type="NCBI Taxonomy" id="224915"/>
    <lineage>
        <taxon>Bacteria</taxon>
        <taxon>Pseudomonadati</taxon>
        <taxon>Pseudomonadota</taxon>
        <taxon>Gammaproteobacteria</taxon>
        <taxon>Enterobacterales</taxon>
        <taxon>Erwiniaceae</taxon>
        <taxon>Buchnera</taxon>
    </lineage>
</organism>
<evidence type="ECO:0000255" key="1">
    <source>
        <dbReference type="HAMAP-Rule" id="MF_00267"/>
    </source>
</evidence>
<name>MINC_BUCBP</name>
<protein>
    <recommendedName>
        <fullName evidence="1">Probable septum site-determining protein MinC</fullName>
    </recommendedName>
</protein>
<gene>
    <name evidence="1" type="primary">minC</name>
    <name type="ordered locus">bbp_304</name>
</gene>
<accession>P59503</accession>
<feature type="chain" id="PRO_0000189026" description="Probable septum site-determining protein MinC">
    <location>
        <begin position="1"/>
        <end position="234"/>
    </location>
</feature>
<comment type="function">
    <text evidence="1">Cell division inhibitor that blocks the formation of polar Z ring septums. Rapidly oscillates between the poles of the cell to destabilize FtsZ filaments that have formed before they mature into polar Z rings. Prevents FtsZ polymerization.</text>
</comment>
<comment type="subunit">
    <text evidence="1">Interacts with MinD and FtsZ.</text>
</comment>
<comment type="similarity">
    <text evidence="1">Belongs to the MinC family.</text>
</comment>
<proteinExistence type="inferred from homology"/>
<sequence length="234" mass="26084">MKILPIKIKGSIFTLLVLYLQNHPVELFKNNLRDKIKNFPTLFKNAPIAINVEKCSNEINWNNIKNAIISCGFNIIGVSGCKNGKLKNNIIKSGLPILSEGKEVFNFFNNINLDDKILSFEKKNYNKTPIFNSPIRSGQKIYANNSDLIITNNVNSGAEVIADGNIHIYGEVRGRVLAGAKGDNTCQIFCTKLFSELVAISGEYLLSGDFSEDTIGNSVKIYMKNKKLHIVKLN</sequence>
<reference key="1">
    <citation type="journal article" date="2003" name="Proc. Natl. Acad. Sci. U.S.A.">
        <title>Reductive genome evolution in Buchnera aphidicola.</title>
        <authorList>
            <person name="van Ham R.C.H.J."/>
            <person name="Kamerbeek J."/>
            <person name="Palacios C."/>
            <person name="Rausell C."/>
            <person name="Abascal F."/>
            <person name="Bastolla U."/>
            <person name="Fernandez J.M."/>
            <person name="Jimenez L."/>
            <person name="Postigo M."/>
            <person name="Silva F.J."/>
            <person name="Tamames J."/>
            <person name="Viguera E."/>
            <person name="Latorre A."/>
            <person name="Valencia A."/>
            <person name="Moran F."/>
            <person name="Moya A."/>
        </authorList>
    </citation>
    <scope>NUCLEOTIDE SEQUENCE [LARGE SCALE GENOMIC DNA]</scope>
    <source>
        <strain>Bp</strain>
    </source>
</reference>